<sequence>MSVSAFNRRWAAVILEALTRHGVRHVCIAPGSRSTPLTLAAAENPAFIHHTHFDERGLGHLALGLAKVSQQPVAVIVTSGTAVANLYPALIEAGLTGEKLILLTADRPPELIDCGANQAIRQAGMFASHPSQTLSLPRPTQDIPARWLVSTIDNALAMLHAGALHINCPFAEPLYGDMNDTGLVWQQRLGDWWQDEKPWLREARRLESDKQRDWFFWRQKRGVVVAGRMSAEEGKKVAQWAQTLGWPLIGDVLSQTGQPLPCADLWLGNAKAVTELQQAQIVVQLGSSLTGKRLLQWQATCEPEEYWVIDNIEGRLDPAHHRGRRLVAKIADWLELHPAEKRKPWCVEIPRLVELAWQRVVAQRDTFGEAQLAHRIRDYLPEQGQLFVGNSLVVRLIDALSQLPAGYPVYSNRGASGIDGLLSTAAGVQRASAKSTLAIVGDLSALYDLNALALLRQVSAPFVLIVVNNNGGQIFSLLPTPQSKRERFYLMPQNVHFDHAAAMFNLRYHRPENWEELESALAGAWRTPAATVIELVVNDTDGAQTLQQLLAQVSHL</sequence>
<name>MEND_SALPC</name>
<gene>
    <name evidence="1" type="primary">menD</name>
    <name type="ordered locus">SPC_1402</name>
</gene>
<dbReference type="EC" id="2.2.1.9" evidence="1"/>
<dbReference type="EMBL" id="CP000857">
    <property type="protein sequence ID" value="ACN45563.1"/>
    <property type="molecule type" value="Genomic_DNA"/>
</dbReference>
<dbReference type="RefSeq" id="WP_000116393.1">
    <property type="nucleotide sequence ID" value="NC_012125.1"/>
</dbReference>
<dbReference type="SMR" id="C0Q059"/>
<dbReference type="KEGG" id="sei:SPC_1402"/>
<dbReference type="HOGENOM" id="CLU_006051_3_0_6"/>
<dbReference type="UniPathway" id="UPA00079"/>
<dbReference type="UniPathway" id="UPA01057">
    <property type="reaction ID" value="UER00164"/>
</dbReference>
<dbReference type="Proteomes" id="UP000001599">
    <property type="component" value="Chromosome"/>
</dbReference>
<dbReference type="GO" id="GO:0070204">
    <property type="term" value="F:2-succinyl-5-enolpyruvyl-6-hydroxy-3-cyclohexene-1-carboxylic-acid synthase activity"/>
    <property type="evidence" value="ECO:0007669"/>
    <property type="project" value="UniProtKB-UniRule"/>
</dbReference>
<dbReference type="GO" id="GO:0000287">
    <property type="term" value="F:magnesium ion binding"/>
    <property type="evidence" value="ECO:0007669"/>
    <property type="project" value="UniProtKB-UniRule"/>
</dbReference>
<dbReference type="GO" id="GO:0030145">
    <property type="term" value="F:manganese ion binding"/>
    <property type="evidence" value="ECO:0007669"/>
    <property type="project" value="UniProtKB-UniRule"/>
</dbReference>
<dbReference type="GO" id="GO:0030976">
    <property type="term" value="F:thiamine pyrophosphate binding"/>
    <property type="evidence" value="ECO:0007669"/>
    <property type="project" value="UniProtKB-UniRule"/>
</dbReference>
<dbReference type="GO" id="GO:0009234">
    <property type="term" value="P:menaquinone biosynthetic process"/>
    <property type="evidence" value="ECO:0007669"/>
    <property type="project" value="UniProtKB-UniRule"/>
</dbReference>
<dbReference type="CDD" id="cd07037">
    <property type="entry name" value="TPP_PYR_MenD"/>
    <property type="match status" value="1"/>
</dbReference>
<dbReference type="CDD" id="cd02009">
    <property type="entry name" value="TPP_SHCHC_synthase"/>
    <property type="match status" value="1"/>
</dbReference>
<dbReference type="FunFam" id="3.40.50.1220:FF:000010">
    <property type="entry name" value="2-succinyl-5-enolpyruvyl-6-hydroxy-3-cyclohexene-1-carboxylate synthase"/>
    <property type="match status" value="1"/>
</dbReference>
<dbReference type="FunFam" id="3.40.50.970:FF:000029">
    <property type="entry name" value="2-succinyl-5-enolpyruvyl-6-hydroxy-3-cyclohexene-1-carboxylate synthase"/>
    <property type="match status" value="1"/>
</dbReference>
<dbReference type="Gene3D" id="3.40.50.970">
    <property type="match status" value="2"/>
</dbReference>
<dbReference type="Gene3D" id="3.40.50.1220">
    <property type="entry name" value="TPP-binding domain"/>
    <property type="match status" value="1"/>
</dbReference>
<dbReference type="HAMAP" id="MF_01659">
    <property type="entry name" value="MenD"/>
    <property type="match status" value="1"/>
</dbReference>
<dbReference type="InterPro" id="IPR004433">
    <property type="entry name" value="MenaQ_synth_MenD"/>
</dbReference>
<dbReference type="InterPro" id="IPR032264">
    <property type="entry name" value="MenD_middle"/>
</dbReference>
<dbReference type="InterPro" id="IPR029061">
    <property type="entry name" value="THDP-binding"/>
</dbReference>
<dbReference type="InterPro" id="IPR012001">
    <property type="entry name" value="Thiamin_PyroP_enz_TPP-bd_dom"/>
</dbReference>
<dbReference type="InterPro" id="IPR011766">
    <property type="entry name" value="TPP_enzyme_TPP-bd"/>
</dbReference>
<dbReference type="NCBIfam" id="TIGR00173">
    <property type="entry name" value="menD"/>
    <property type="match status" value="1"/>
</dbReference>
<dbReference type="PANTHER" id="PTHR42916">
    <property type="entry name" value="2-SUCCINYL-5-ENOLPYRUVYL-6-HYDROXY-3-CYCLOHEXENE-1-CARBOXYLATE SYNTHASE"/>
    <property type="match status" value="1"/>
</dbReference>
<dbReference type="PANTHER" id="PTHR42916:SF1">
    <property type="entry name" value="PROTEIN PHYLLO, CHLOROPLASTIC"/>
    <property type="match status" value="1"/>
</dbReference>
<dbReference type="Pfam" id="PF02775">
    <property type="entry name" value="TPP_enzyme_C"/>
    <property type="match status" value="1"/>
</dbReference>
<dbReference type="Pfam" id="PF16582">
    <property type="entry name" value="TPP_enzyme_M_2"/>
    <property type="match status" value="1"/>
</dbReference>
<dbReference type="Pfam" id="PF02776">
    <property type="entry name" value="TPP_enzyme_N"/>
    <property type="match status" value="1"/>
</dbReference>
<dbReference type="PIRSF" id="PIRSF004983">
    <property type="entry name" value="MenD"/>
    <property type="match status" value="1"/>
</dbReference>
<dbReference type="SUPFAM" id="SSF52518">
    <property type="entry name" value="Thiamin diphosphate-binding fold (THDP-binding)"/>
    <property type="match status" value="2"/>
</dbReference>
<evidence type="ECO:0000255" key="1">
    <source>
        <dbReference type="HAMAP-Rule" id="MF_01659"/>
    </source>
</evidence>
<organism>
    <name type="scientific">Salmonella paratyphi C (strain RKS4594)</name>
    <dbReference type="NCBI Taxonomy" id="476213"/>
    <lineage>
        <taxon>Bacteria</taxon>
        <taxon>Pseudomonadati</taxon>
        <taxon>Pseudomonadota</taxon>
        <taxon>Gammaproteobacteria</taxon>
        <taxon>Enterobacterales</taxon>
        <taxon>Enterobacteriaceae</taxon>
        <taxon>Salmonella</taxon>
    </lineage>
</organism>
<feature type="chain" id="PRO_1000187094" description="2-succinyl-5-enolpyruvyl-6-hydroxy-3-cyclohexene-1-carboxylate synthase">
    <location>
        <begin position="1"/>
        <end position="556"/>
    </location>
</feature>
<accession>C0Q059</accession>
<comment type="function">
    <text evidence="1">Catalyzes the thiamine diphosphate-dependent decarboxylation of 2-oxoglutarate and the subsequent addition of the resulting succinic semialdehyde-thiamine pyrophosphate anion to isochorismate to yield 2-succinyl-5-enolpyruvyl-6-hydroxy-3-cyclohexene-1-carboxylate (SEPHCHC).</text>
</comment>
<comment type="catalytic activity">
    <reaction evidence="1">
        <text>isochorismate + 2-oxoglutarate + H(+) = 5-enolpyruvoyl-6-hydroxy-2-succinyl-cyclohex-3-ene-1-carboxylate + CO2</text>
        <dbReference type="Rhea" id="RHEA:25593"/>
        <dbReference type="ChEBI" id="CHEBI:15378"/>
        <dbReference type="ChEBI" id="CHEBI:16526"/>
        <dbReference type="ChEBI" id="CHEBI:16810"/>
        <dbReference type="ChEBI" id="CHEBI:29780"/>
        <dbReference type="ChEBI" id="CHEBI:58818"/>
        <dbReference type="EC" id="2.2.1.9"/>
    </reaction>
</comment>
<comment type="cofactor">
    <cofactor evidence="1">
        <name>Mg(2+)</name>
        <dbReference type="ChEBI" id="CHEBI:18420"/>
    </cofactor>
    <cofactor evidence="1">
        <name>Mn(2+)</name>
        <dbReference type="ChEBI" id="CHEBI:29035"/>
    </cofactor>
</comment>
<comment type="cofactor">
    <cofactor evidence="1">
        <name>thiamine diphosphate</name>
        <dbReference type="ChEBI" id="CHEBI:58937"/>
    </cofactor>
    <text evidence="1">Binds 1 thiamine pyrophosphate per subunit.</text>
</comment>
<comment type="pathway">
    <text evidence="1">Quinol/quinone metabolism; 1,4-dihydroxy-2-naphthoate biosynthesis; 1,4-dihydroxy-2-naphthoate from chorismate: step 2/7.</text>
</comment>
<comment type="pathway">
    <text evidence="1">Quinol/quinone metabolism; menaquinone biosynthesis.</text>
</comment>
<comment type="subunit">
    <text evidence="1">Homodimer.</text>
</comment>
<comment type="similarity">
    <text evidence="1">Belongs to the TPP enzyme family. MenD subfamily.</text>
</comment>
<proteinExistence type="inferred from homology"/>
<protein>
    <recommendedName>
        <fullName evidence="1">2-succinyl-5-enolpyruvyl-6-hydroxy-3-cyclohexene-1-carboxylate synthase</fullName>
        <shortName evidence="1">SEPHCHC synthase</shortName>
        <ecNumber evidence="1">2.2.1.9</ecNumber>
    </recommendedName>
    <alternativeName>
        <fullName evidence="1">Menaquinone biosynthesis protein MenD</fullName>
    </alternativeName>
</protein>
<reference key="1">
    <citation type="journal article" date="2009" name="PLoS ONE">
        <title>Salmonella paratyphi C: genetic divergence from Salmonella choleraesuis and pathogenic convergence with Salmonella typhi.</title>
        <authorList>
            <person name="Liu W.-Q."/>
            <person name="Feng Y."/>
            <person name="Wang Y."/>
            <person name="Zou Q.-H."/>
            <person name="Chen F."/>
            <person name="Guo J.-T."/>
            <person name="Peng Y.-H."/>
            <person name="Jin Y."/>
            <person name="Li Y.-G."/>
            <person name="Hu S.-N."/>
            <person name="Johnston R.N."/>
            <person name="Liu G.-R."/>
            <person name="Liu S.-L."/>
        </authorList>
    </citation>
    <scope>NUCLEOTIDE SEQUENCE [LARGE SCALE GENOMIC DNA]</scope>
    <source>
        <strain>RKS4594</strain>
    </source>
</reference>
<keyword id="KW-0460">Magnesium</keyword>
<keyword id="KW-0464">Manganese</keyword>
<keyword id="KW-0474">Menaquinone biosynthesis</keyword>
<keyword id="KW-0479">Metal-binding</keyword>
<keyword id="KW-0786">Thiamine pyrophosphate</keyword>
<keyword id="KW-0808">Transferase</keyword>